<reference key="1">
    <citation type="journal article" date="2002" name="Lancet">
        <title>Genome and virulence determinants of high virulence community-acquired MRSA.</title>
        <authorList>
            <person name="Baba T."/>
            <person name="Takeuchi F."/>
            <person name="Kuroda M."/>
            <person name="Yuzawa H."/>
            <person name="Aoki K."/>
            <person name="Oguchi A."/>
            <person name="Nagai Y."/>
            <person name="Iwama N."/>
            <person name="Asano K."/>
            <person name="Naimi T."/>
            <person name="Kuroda H."/>
            <person name="Cui L."/>
            <person name="Yamamoto K."/>
            <person name="Hiramatsu K."/>
        </authorList>
    </citation>
    <scope>NUCLEOTIDE SEQUENCE [LARGE SCALE GENOMIC DNA]</scope>
    <source>
        <strain>MW2</strain>
    </source>
</reference>
<gene>
    <name evidence="1" type="primary">rpmB</name>
    <name type="ordered locus">MW1107</name>
</gene>
<name>RL28_STAAW</name>
<comment type="similarity">
    <text evidence="1">Belongs to the bacterial ribosomal protein bL28 family.</text>
</comment>
<evidence type="ECO:0000255" key="1">
    <source>
        <dbReference type="HAMAP-Rule" id="MF_00373"/>
    </source>
</evidence>
<evidence type="ECO:0000256" key="2">
    <source>
        <dbReference type="SAM" id="MobiDB-lite"/>
    </source>
</evidence>
<evidence type="ECO:0000305" key="3"/>
<sequence length="62" mass="6977">MGKQCFVTGRKASTGNRRSHALNSTKRRWNANLQKVRILVDGKPKKVWVSARALKSGKVTRV</sequence>
<proteinExistence type="evidence at protein level"/>
<protein>
    <recommendedName>
        <fullName evidence="1">Large ribosomal subunit protein bL28</fullName>
    </recommendedName>
    <alternativeName>
        <fullName evidence="3">50S ribosomal protein L28</fullName>
    </alternativeName>
</protein>
<dbReference type="EMBL" id="BA000033">
    <property type="protein sequence ID" value="BAB94972.1"/>
    <property type="molecule type" value="Genomic_DNA"/>
</dbReference>
<dbReference type="RefSeq" id="WP_000517908.1">
    <property type="nucleotide sequence ID" value="NC_003923.1"/>
</dbReference>
<dbReference type="PDB" id="8Y36">
    <property type="method" value="EM"/>
    <property type="resolution" value="2.65 A"/>
    <property type="chains" value="V=3-60"/>
</dbReference>
<dbReference type="PDB" id="8Y37">
    <property type="method" value="EM"/>
    <property type="resolution" value="2.53 A"/>
    <property type="chains" value="V=3-60"/>
</dbReference>
<dbReference type="PDB" id="8Y38">
    <property type="method" value="EM"/>
    <property type="resolution" value="2.58 A"/>
    <property type="chains" value="V=3-60"/>
</dbReference>
<dbReference type="PDB" id="8Y39">
    <property type="method" value="EM"/>
    <property type="resolution" value="3.60 A"/>
    <property type="chains" value="V=3-60"/>
</dbReference>
<dbReference type="PDBsum" id="8Y36"/>
<dbReference type="PDBsum" id="8Y37"/>
<dbReference type="PDBsum" id="8Y38"/>
<dbReference type="PDBsum" id="8Y39"/>
<dbReference type="EMDB" id="EMD-38873"/>
<dbReference type="EMDB" id="EMD-38874"/>
<dbReference type="EMDB" id="EMD-38875"/>
<dbReference type="EMDB" id="EMD-38876"/>
<dbReference type="SMR" id="P66154"/>
<dbReference type="GeneID" id="98345539"/>
<dbReference type="KEGG" id="sam:MW1107"/>
<dbReference type="HOGENOM" id="CLU_064548_7_1_9"/>
<dbReference type="GO" id="GO:1990904">
    <property type="term" value="C:ribonucleoprotein complex"/>
    <property type="evidence" value="ECO:0007669"/>
    <property type="project" value="UniProtKB-KW"/>
</dbReference>
<dbReference type="GO" id="GO:0005840">
    <property type="term" value="C:ribosome"/>
    <property type="evidence" value="ECO:0007669"/>
    <property type="project" value="UniProtKB-KW"/>
</dbReference>
<dbReference type="GO" id="GO:0003735">
    <property type="term" value="F:structural constituent of ribosome"/>
    <property type="evidence" value="ECO:0007669"/>
    <property type="project" value="InterPro"/>
</dbReference>
<dbReference type="GO" id="GO:0006412">
    <property type="term" value="P:translation"/>
    <property type="evidence" value="ECO:0007669"/>
    <property type="project" value="UniProtKB-UniRule"/>
</dbReference>
<dbReference type="Gene3D" id="2.30.170.40">
    <property type="entry name" value="Ribosomal protein L28/L24"/>
    <property type="match status" value="1"/>
</dbReference>
<dbReference type="HAMAP" id="MF_00373">
    <property type="entry name" value="Ribosomal_bL28"/>
    <property type="match status" value="1"/>
</dbReference>
<dbReference type="InterPro" id="IPR050096">
    <property type="entry name" value="Bacterial_rp_bL28"/>
</dbReference>
<dbReference type="InterPro" id="IPR026569">
    <property type="entry name" value="Ribosomal_bL28"/>
</dbReference>
<dbReference type="InterPro" id="IPR034704">
    <property type="entry name" value="Ribosomal_bL28/bL31-like_sf"/>
</dbReference>
<dbReference type="InterPro" id="IPR001383">
    <property type="entry name" value="Ribosomal_bL28_bact-type"/>
</dbReference>
<dbReference type="InterPro" id="IPR037147">
    <property type="entry name" value="Ribosomal_bL28_sf"/>
</dbReference>
<dbReference type="NCBIfam" id="TIGR00009">
    <property type="entry name" value="L28"/>
    <property type="match status" value="1"/>
</dbReference>
<dbReference type="PANTHER" id="PTHR39080">
    <property type="entry name" value="50S RIBOSOMAL PROTEIN L28"/>
    <property type="match status" value="1"/>
</dbReference>
<dbReference type="PANTHER" id="PTHR39080:SF1">
    <property type="entry name" value="LARGE RIBOSOMAL SUBUNIT PROTEIN BL28A"/>
    <property type="match status" value="1"/>
</dbReference>
<dbReference type="Pfam" id="PF00830">
    <property type="entry name" value="Ribosomal_L28"/>
    <property type="match status" value="1"/>
</dbReference>
<dbReference type="SUPFAM" id="SSF143800">
    <property type="entry name" value="L28p-like"/>
    <property type="match status" value="1"/>
</dbReference>
<accession>P66154</accession>
<accession>Q99UP4</accession>
<organism>
    <name type="scientific">Staphylococcus aureus (strain MW2)</name>
    <dbReference type="NCBI Taxonomy" id="196620"/>
    <lineage>
        <taxon>Bacteria</taxon>
        <taxon>Bacillati</taxon>
        <taxon>Bacillota</taxon>
        <taxon>Bacilli</taxon>
        <taxon>Bacillales</taxon>
        <taxon>Staphylococcaceae</taxon>
        <taxon>Staphylococcus</taxon>
    </lineage>
</organism>
<feature type="chain" id="PRO_0000178553" description="Large ribosomal subunit protein bL28">
    <location>
        <begin position="1"/>
        <end position="62"/>
    </location>
</feature>
<feature type="region of interest" description="Disordered" evidence="2">
    <location>
        <begin position="1"/>
        <end position="22"/>
    </location>
</feature>
<keyword id="KW-0002">3D-structure</keyword>
<keyword id="KW-0687">Ribonucleoprotein</keyword>
<keyword id="KW-0689">Ribosomal protein</keyword>